<accession>Q7RTS1</accession>
<accession>A4D271</accession>
<accession>Q14DE4</accession>
<dbReference type="EMBL" id="AC025605">
    <property type="status" value="NOT_ANNOTATED_CDS"/>
    <property type="molecule type" value="Genomic_DNA"/>
</dbReference>
<dbReference type="EMBL" id="CH236956">
    <property type="protein sequence ID" value="EAL23893.1"/>
    <property type="molecule type" value="Genomic_DNA"/>
</dbReference>
<dbReference type="EMBL" id="BC113394">
    <property type="protein sequence ID" value="AAI13395.1"/>
    <property type="molecule type" value="mRNA"/>
</dbReference>
<dbReference type="EMBL" id="BC113396">
    <property type="protein sequence ID" value="AAI13397.1"/>
    <property type="molecule type" value="mRNA"/>
</dbReference>
<dbReference type="EMBL" id="BK000276">
    <property type="protein sequence ID" value="DAA01056.1"/>
    <property type="molecule type" value="mRNA"/>
</dbReference>
<dbReference type="CCDS" id="CCDS5655.1"/>
<dbReference type="RefSeq" id="NP_803238.1">
    <property type="nucleotide sequence ID" value="NM_177455.4"/>
</dbReference>
<dbReference type="SMR" id="Q7RTS1"/>
<dbReference type="BioGRID" id="127970">
    <property type="interactions" value="76"/>
</dbReference>
<dbReference type="FunCoup" id="Q7RTS1">
    <property type="interactions" value="910"/>
</dbReference>
<dbReference type="IntAct" id="Q7RTS1">
    <property type="interactions" value="66"/>
</dbReference>
<dbReference type="MINT" id="Q7RTS1"/>
<dbReference type="STRING" id="9606.ENSP00000476312"/>
<dbReference type="iPTMnet" id="Q7RTS1"/>
<dbReference type="PhosphoSitePlus" id="Q7RTS1"/>
<dbReference type="BioMuta" id="BHLHA15"/>
<dbReference type="DMDM" id="50400944"/>
<dbReference type="jPOST" id="Q7RTS1"/>
<dbReference type="MassIVE" id="Q7RTS1"/>
<dbReference type="PaxDb" id="9606-ENSP00000476312"/>
<dbReference type="PeptideAtlas" id="Q7RTS1"/>
<dbReference type="ProteomicsDB" id="68891"/>
<dbReference type="Antibodypedia" id="30223">
    <property type="antibodies" value="123 antibodies from 25 providers"/>
</dbReference>
<dbReference type="DNASU" id="168620"/>
<dbReference type="Ensembl" id="ENST00000314018.2">
    <property type="protein sequence ID" value="ENSP00000326391.2"/>
    <property type="gene ID" value="ENSG00000180535.4"/>
</dbReference>
<dbReference type="Ensembl" id="ENST00000609256.2">
    <property type="protein sequence ID" value="ENSP00000476312.1"/>
    <property type="gene ID" value="ENSG00000180535.4"/>
</dbReference>
<dbReference type="GeneID" id="168620"/>
<dbReference type="KEGG" id="hsa:168620"/>
<dbReference type="MANE-Select" id="ENST00000609256.2">
    <property type="protein sequence ID" value="ENSP00000476312.1"/>
    <property type="RefSeq nucleotide sequence ID" value="NM_177455.4"/>
    <property type="RefSeq protein sequence ID" value="NP_803238.1"/>
</dbReference>
<dbReference type="UCSC" id="uc003upe.2">
    <property type="organism name" value="human"/>
</dbReference>
<dbReference type="AGR" id="HGNC:22265"/>
<dbReference type="CTD" id="168620"/>
<dbReference type="DisGeNET" id="168620"/>
<dbReference type="GeneCards" id="BHLHA15"/>
<dbReference type="HGNC" id="HGNC:22265">
    <property type="gene designation" value="BHLHA15"/>
</dbReference>
<dbReference type="HPA" id="ENSG00000180535">
    <property type="expression patterns" value="Group enriched (pancreas, salivary gland)"/>
</dbReference>
<dbReference type="MIM" id="608606">
    <property type="type" value="gene"/>
</dbReference>
<dbReference type="neXtProt" id="NX_Q7RTS1"/>
<dbReference type="OpenTargets" id="ENSG00000180535"/>
<dbReference type="PharmGKB" id="PA164716601"/>
<dbReference type="VEuPathDB" id="HostDB:ENSG00000180535"/>
<dbReference type="eggNOG" id="KOG3898">
    <property type="taxonomic scope" value="Eukaryota"/>
</dbReference>
<dbReference type="GeneTree" id="ENSGT00940000161824"/>
<dbReference type="HOGENOM" id="CLU_097977_2_0_1"/>
<dbReference type="InParanoid" id="Q7RTS1"/>
<dbReference type="OMA" id="HRYSTQI"/>
<dbReference type="OrthoDB" id="5969565at2759"/>
<dbReference type="PAN-GO" id="Q7RTS1">
    <property type="GO annotations" value="5 GO annotations based on evolutionary models"/>
</dbReference>
<dbReference type="PhylomeDB" id="Q7RTS1"/>
<dbReference type="TreeFam" id="TF315153"/>
<dbReference type="PathwayCommons" id="Q7RTS1"/>
<dbReference type="Reactome" id="R-HSA-9925561">
    <property type="pathway name" value="Developmental Lineage of Pancreatic Acinar Cells"/>
</dbReference>
<dbReference type="SignaLink" id="Q7RTS1"/>
<dbReference type="BioGRID-ORCS" id="168620">
    <property type="hits" value="71 hits in 1172 CRISPR screens"/>
</dbReference>
<dbReference type="GeneWiki" id="BHLHB8"/>
<dbReference type="GenomeRNAi" id="168620"/>
<dbReference type="Pharos" id="Q7RTS1">
    <property type="development level" value="Tbio"/>
</dbReference>
<dbReference type="PRO" id="PR:Q7RTS1"/>
<dbReference type="Proteomes" id="UP000005640">
    <property type="component" value="Chromosome 7"/>
</dbReference>
<dbReference type="RNAct" id="Q7RTS1">
    <property type="molecule type" value="protein"/>
</dbReference>
<dbReference type="Bgee" id="ENSG00000180535">
    <property type="expression patterns" value="Expressed in parotid gland and 102 other cell types or tissues"/>
</dbReference>
<dbReference type="GO" id="GO:0000785">
    <property type="term" value="C:chromatin"/>
    <property type="evidence" value="ECO:0000247"/>
    <property type="project" value="NTNU_SB"/>
</dbReference>
<dbReference type="GO" id="GO:0005634">
    <property type="term" value="C:nucleus"/>
    <property type="evidence" value="ECO:0000318"/>
    <property type="project" value="GO_Central"/>
</dbReference>
<dbReference type="GO" id="GO:0001228">
    <property type="term" value="F:DNA-binding transcription activator activity, RNA polymerase II-specific"/>
    <property type="evidence" value="ECO:0007669"/>
    <property type="project" value="Ensembl"/>
</dbReference>
<dbReference type="GO" id="GO:0000981">
    <property type="term" value="F:DNA-binding transcription factor activity, RNA polymerase II-specific"/>
    <property type="evidence" value="ECO:0000247"/>
    <property type="project" value="NTNU_SB"/>
</dbReference>
<dbReference type="GO" id="GO:0070888">
    <property type="term" value="F:E-box binding"/>
    <property type="evidence" value="ECO:0000318"/>
    <property type="project" value="GO_Central"/>
</dbReference>
<dbReference type="GO" id="GO:0042802">
    <property type="term" value="F:identical protein binding"/>
    <property type="evidence" value="ECO:0007669"/>
    <property type="project" value="Ensembl"/>
</dbReference>
<dbReference type="GO" id="GO:0046983">
    <property type="term" value="F:protein dimerization activity"/>
    <property type="evidence" value="ECO:0007669"/>
    <property type="project" value="InterPro"/>
</dbReference>
<dbReference type="GO" id="GO:1990837">
    <property type="term" value="F:sequence-specific double-stranded DNA binding"/>
    <property type="evidence" value="ECO:0000314"/>
    <property type="project" value="ARUK-UCL"/>
</dbReference>
<dbReference type="GO" id="GO:0061564">
    <property type="term" value="P:axon development"/>
    <property type="evidence" value="ECO:0000318"/>
    <property type="project" value="GO_Central"/>
</dbReference>
<dbReference type="GO" id="GO:0019722">
    <property type="term" value="P:calcium-mediated signaling"/>
    <property type="evidence" value="ECO:0007669"/>
    <property type="project" value="Ensembl"/>
</dbReference>
<dbReference type="GO" id="GO:0044331">
    <property type="term" value="P:cell-cell adhesion mediated by cadherin"/>
    <property type="evidence" value="ECO:0007669"/>
    <property type="project" value="Ensembl"/>
</dbReference>
<dbReference type="GO" id="GO:0045216">
    <property type="term" value="P:cell-cell junction organization"/>
    <property type="evidence" value="ECO:0007669"/>
    <property type="project" value="Ensembl"/>
</dbReference>
<dbReference type="GO" id="GO:0007267">
    <property type="term" value="P:cell-cell signaling"/>
    <property type="evidence" value="ECO:0007669"/>
    <property type="project" value="Ensembl"/>
</dbReference>
<dbReference type="GO" id="GO:0042149">
    <property type="term" value="P:cellular response to glucose starvation"/>
    <property type="evidence" value="ECO:0000250"/>
    <property type="project" value="UniProtKB"/>
</dbReference>
<dbReference type="GO" id="GO:0030968">
    <property type="term" value="P:endoplasmic reticulum unfolded protein response"/>
    <property type="evidence" value="ECO:0000250"/>
    <property type="project" value="UniProtKB"/>
</dbReference>
<dbReference type="GO" id="GO:0051649">
    <property type="term" value="P:establishment of localization in cell"/>
    <property type="evidence" value="ECO:0007669"/>
    <property type="project" value="Ensembl"/>
</dbReference>
<dbReference type="GO" id="GO:0007186">
    <property type="term" value="P:G protein-coupled receptor signaling pathway"/>
    <property type="evidence" value="ECO:0007669"/>
    <property type="project" value="Ensembl"/>
</dbReference>
<dbReference type="GO" id="GO:0002071">
    <property type="term" value="P:glandular epithelial cell maturation"/>
    <property type="evidence" value="ECO:0007669"/>
    <property type="project" value="Ensembl"/>
</dbReference>
<dbReference type="GO" id="GO:0042593">
    <property type="term" value="P:glucose homeostasis"/>
    <property type="evidence" value="ECO:0007669"/>
    <property type="project" value="Ensembl"/>
</dbReference>
<dbReference type="GO" id="GO:0007030">
    <property type="term" value="P:Golgi organization"/>
    <property type="evidence" value="ECO:0007669"/>
    <property type="project" value="Ensembl"/>
</dbReference>
<dbReference type="GO" id="GO:0048312">
    <property type="term" value="P:intracellular distribution of mitochondria"/>
    <property type="evidence" value="ECO:0007669"/>
    <property type="project" value="Ensembl"/>
</dbReference>
<dbReference type="GO" id="GO:0051674">
    <property type="term" value="P:localization of cell"/>
    <property type="evidence" value="ECO:0007669"/>
    <property type="project" value="Ensembl"/>
</dbReference>
<dbReference type="GO" id="GO:0006851">
    <property type="term" value="P:mitochondrial calcium ion transmembrane transport"/>
    <property type="evidence" value="ECO:0007669"/>
    <property type="project" value="Ensembl"/>
</dbReference>
<dbReference type="GO" id="GO:0010832">
    <property type="term" value="P:negative regulation of myotube differentiation"/>
    <property type="evidence" value="ECO:0000250"/>
    <property type="project" value="UniProtKB"/>
</dbReference>
<dbReference type="GO" id="GO:0045944">
    <property type="term" value="P:positive regulation of transcription by RNA polymerase II"/>
    <property type="evidence" value="ECO:0000318"/>
    <property type="project" value="GO_Central"/>
</dbReference>
<dbReference type="GO" id="GO:0007423">
    <property type="term" value="P:sensory organ development"/>
    <property type="evidence" value="ECO:0000318"/>
    <property type="project" value="GO_Central"/>
</dbReference>
<dbReference type="GO" id="GO:0072560">
    <property type="term" value="P:type B pancreatic cell maturation"/>
    <property type="evidence" value="ECO:0007669"/>
    <property type="project" value="Ensembl"/>
</dbReference>
<dbReference type="CDD" id="cd19711">
    <property type="entry name" value="bHLH_TS_MIST1"/>
    <property type="match status" value="1"/>
</dbReference>
<dbReference type="FunFam" id="4.10.280.10:FF:000065">
    <property type="entry name" value="class A basic helix-loop-helix protein 15"/>
    <property type="match status" value="1"/>
</dbReference>
<dbReference type="Gene3D" id="4.10.280.10">
    <property type="entry name" value="Helix-loop-helix DNA-binding domain"/>
    <property type="match status" value="1"/>
</dbReference>
<dbReference type="InterPro" id="IPR011598">
    <property type="entry name" value="bHLH_dom"/>
</dbReference>
<dbReference type="InterPro" id="IPR050359">
    <property type="entry name" value="bHLH_transcription_factors"/>
</dbReference>
<dbReference type="InterPro" id="IPR036638">
    <property type="entry name" value="HLH_DNA-bd_sf"/>
</dbReference>
<dbReference type="PANTHER" id="PTHR19290">
    <property type="entry name" value="BASIC HELIX-LOOP-HELIX PROTEIN NEUROGENIN-RELATED"/>
    <property type="match status" value="1"/>
</dbReference>
<dbReference type="PANTHER" id="PTHR19290:SF160">
    <property type="entry name" value="CLASS A BASIC HELIX-LOOP-HELIX PROTEIN 15"/>
    <property type="match status" value="1"/>
</dbReference>
<dbReference type="Pfam" id="PF00010">
    <property type="entry name" value="HLH"/>
    <property type="match status" value="1"/>
</dbReference>
<dbReference type="SMART" id="SM00353">
    <property type="entry name" value="HLH"/>
    <property type="match status" value="1"/>
</dbReference>
<dbReference type="SUPFAM" id="SSF47459">
    <property type="entry name" value="HLH, helix-loop-helix DNA-binding domain"/>
    <property type="match status" value="1"/>
</dbReference>
<dbReference type="PROSITE" id="PS50888">
    <property type="entry name" value="BHLH"/>
    <property type="match status" value="1"/>
</dbReference>
<sequence>MKTKNRPPRRRAPVQDTEATPGEGTPDGSLPNPGPEPAKGLRSRPARAAARAPGEGRRRRPGPSGPGGRRDSSIQRRLESNERERQRMHKLNNAFQALREVIPHVRADKKLSKIETLTLAKNYIKSLTATILTMSSSRLPGLEGPGPKLYQHYQQQQQVAGGALGATEAQPQGHLQRYSTQIHSFREGT</sequence>
<comment type="function">
    <text evidence="2">Plays a role in controlling the transcriptional activity of MYOD1, ensuring that expanding myoblast populations remain undifferentiated. Repression may occur through muscle-specific E-box occupancy by homodimers. May also negatively regulate bHLH-mediated transcription through an N-terminal repressor domain. Serves as a key regulator of acinar cell function, stability, and identity. Also required for normal organelle localization in exocrine cells and for mitochondrial calcium ion transport. May function as a unique regulator of gene expression in several different embryonic and postnatal cell lineages. Binds to the E-box consensus sequence 5'-CANNTG-3' (By similarity).</text>
</comment>
<comment type="subunit">
    <text evidence="1">Forms homodimers or heterodimers with TCF3 gene products E12 and E47. These dimers bind to the E-box site, however, heterodimer with MYOD1 does not bind target DNA (By similarity).</text>
</comment>
<comment type="interaction">
    <interactant intactId="EBI-8844218">
        <id>Q7RTS1</id>
    </interactant>
    <interactant intactId="EBI-3906629">
        <id>P15173</id>
        <label>MYOG</label>
    </interactant>
    <organismsDiffer>false</organismsDiffer>
    <experiments>3</experiments>
</comment>
<comment type="subcellular location">
    <subcellularLocation>
        <location evidence="6">Nucleus</location>
    </subcellularLocation>
</comment>
<comment type="tissue specificity">
    <text evidence="5">Expressed in brain, liver, spleen and skeletal muscle.</text>
</comment>
<comment type="domain">
    <text evidence="1">Lacks a classic transcription activation domain and instead possesses an N-terminal region capable of inhibiting heterologous activators.</text>
</comment>
<gene>
    <name type="primary">BHLHA15</name>
    <name type="synonym">BHLHB8</name>
    <name type="synonym">MIST1</name>
</gene>
<reference key="1">
    <citation type="journal article" date="2003" name="Nature">
        <title>The DNA sequence of human chromosome 7.</title>
        <authorList>
            <person name="Hillier L.W."/>
            <person name="Fulton R.S."/>
            <person name="Fulton L.A."/>
            <person name="Graves T.A."/>
            <person name="Pepin K.H."/>
            <person name="Wagner-McPherson C."/>
            <person name="Layman D."/>
            <person name="Maas J."/>
            <person name="Jaeger S."/>
            <person name="Walker R."/>
            <person name="Wylie K."/>
            <person name="Sekhon M."/>
            <person name="Becker M.C."/>
            <person name="O'Laughlin M.D."/>
            <person name="Schaller M.E."/>
            <person name="Fewell G.A."/>
            <person name="Delehaunty K.D."/>
            <person name="Miner T.L."/>
            <person name="Nash W.E."/>
            <person name="Cordes M."/>
            <person name="Du H."/>
            <person name="Sun H."/>
            <person name="Edwards J."/>
            <person name="Bradshaw-Cordum H."/>
            <person name="Ali J."/>
            <person name="Andrews S."/>
            <person name="Isak A."/>
            <person name="Vanbrunt A."/>
            <person name="Nguyen C."/>
            <person name="Du F."/>
            <person name="Lamar B."/>
            <person name="Courtney L."/>
            <person name="Kalicki J."/>
            <person name="Ozersky P."/>
            <person name="Bielicki L."/>
            <person name="Scott K."/>
            <person name="Holmes A."/>
            <person name="Harkins R."/>
            <person name="Harris A."/>
            <person name="Strong C.M."/>
            <person name="Hou S."/>
            <person name="Tomlinson C."/>
            <person name="Dauphin-Kohlberg S."/>
            <person name="Kozlowicz-Reilly A."/>
            <person name="Leonard S."/>
            <person name="Rohlfing T."/>
            <person name="Rock S.M."/>
            <person name="Tin-Wollam A.-M."/>
            <person name="Abbott A."/>
            <person name="Minx P."/>
            <person name="Maupin R."/>
            <person name="Strowmatt C."/>
            <person name="Latreille P."/>
            <person name="Miller N."/>
            <person name="Johnson D."/>
            <person name="Murray J."/>
            <person name="Woessner J.P."/>
            <person name="Wendl M.C."/>
            <person name="Yang S.-P."/>
            <person name="Schultz B.R."/>
            <person name="Wallis J.W."/>
            <person name="Spieth J."/>
            <person name="Bieri T.A."/>
            <person name="Nelson J.O."/>
            <person name="Berkowicz N."/>
            <person name="Wohldmann P.E."/>
            <person name="Cook L.L."/>
            <person name="Hickenbotham M.T."/>
            <person name="Eldred J."/>
            <person name="Williams D."/>
            <person name="Bedell J.A."/>
            <person name="Mardis E.R."/>
            <person name="Clifton S.W."/>
            <person name="Chissoe S.L."/>
            <person name="Marra M.A."/>
            <person name="Raymond C."/>
            <person name="Haugen E."/>
            <person name="Gillett W."/>
            <person name="Zhou Y."/>
            <person name="James R."/>
            <person name="Phelps K."/>
            <person name="Iadanoto S."/>
            <person name="Bubb K."/>
            <person name="Simms E."/>
            <person name="Levy R."/>
            <person name="Clendenning J."/>
            <person name="Kaul R."/>
            <person name="Kent W.J."/>
            <person name="Furey T.S."/>
            <person name="Baertsch R.A."/>
            <person name="Brent M.R."/>
            <person name="Keibler E."/>
            <person name="Flicek P."/>
            <person name="Bork P."/>
            <person name="Suyama M."/>
            <person name="Bailey J.A."/>
            <person name="Portnoy M.E."/>
            <person name="Torrents D."/>
            <person name="Chinwalla A.T."/>
            <person name="Gish W.R."/>
            <person name="Eddy S.R."/>
            <person name="McPherson J.D."/>
            <person name="Olson M.V."/>
            <person name="Eichler E.E."/>
            <person name="Green E.D."/>
            <person name="Waterston R.H."/>
            <person name="Wilson R.K."/>
        </authorList>
    </citation>
    <scope>NUCLEOTIDE SEQUENCE [LARGE SCALE GENOMIC DNA]</scope>
</reference>
<reference key="2">
    <citation type="journal article" date="2003" name="Science">
        <title>Human chromosome 7: DNA sequence and biology.</title>
        <authorList>
            <person name="Scherer S.W."/>
            <person name="Cheung J."/>
            <person name="MacDonald J.R."/>
            <person name="Osborne L.R."/>
            <person name="Nakabayashi K."/>
            <person name="Herbrick J.-A."/>
            <person name="Carson A.R."/>
            <person name="Parker-Katiraee L."/>
            <person name="Skaug J."/>
            <person name="Khaja R."/>
            <person name="Zhang J."/>
            <person name="Hudek A.K."/>
            <person name="Li M."/>
            <person name="Haddad M."/>
            <person name="Duggan G.E."/>
            <person name="Fernandez B.A."/>
            <person name="Kanematsu E."/>
            <person name="Gentles S."/>
            <person name="Christopoulos C.C."/>
            <person name="Choufani S."/>
            <person name="Kwasnicka D."/>
            <person name="Zheng X.H."/>
            <person name="Lai Z."/>
            <person name="Nusskern D.R."/>
            <person name="Zhang Q."/>
            <person name="Gu Z."/>
            <person name="Lu F."/>
            <person name="Zeesman S."/>
            <person name="Nowaczyk M.J."/>
            <person name="Teshima I."/>
            <person name="Chitayat D."/>
            <person name="Shuman C."/>
            <person name="Weksberg R."/>
            <person name="Zackai E.H."/>
            <person name="Grebe T.A."/>
            <person name="Cox S.R."/>
            <person name="Kirkpatrick S.J."/>
            <person name="Rahman N."/>
            <person name="Friedman J.M."/>
            <person name="Heng H.H.Q."/>
            <person name="Pelicci P.G."/>
            <person name="Lo-Coco F."/>
            <person name="Belloni E."/>
            <person name="Shaffer L.G."/>
            <person name="Pober B."/>
            <person name="Morton C.C."/>
            <person name="Gusella J.F."/>
            <person name="Bruns G.A.P."/>
            <person name="Korf B.R."/>
            <person name="Quade B.J."/>
            <person name="Ligon A.H."/>
            <person name="Ferguson H."/>
            <person name="Higgins A.W."/>
            <person name="Leach N.T."/>
            <person name="Herrick S.R."/>
            <person name="Lemyre E."/>
            <person name="Farra C.G."/>
            <person name="Kim H.-G."/>
            <person name="Summers A.M."/>
            <person name="Gripp K.W."/>
            <person name="Roberts W."/>
            <person name="Szatmari P."/>
            <person name="Winsor E.J.T."/>
            <person name="Grzeschik K.-H."/>
            <person name="Teebi A."/>
            <person name="Minassian B.A."/>
            <person name="Kere J."/>
            <person name="Armengol L."/>
            <person name="Pujana M.A."/>
            <person name="Estivill X."/>
            <person name="Wilson M.D."/>
            <person name="Koop B.F."/>
            <person name="Tosi S."/>
            <person name="Moore G.E."/>
            <person name="Boright A.P."/>
            <person name="Zlotorynski E."/>
            <person name="Kerem B."/>
            <person name="Kroisel P.M."/>
            <person name="Petek E."/>
            <person name="Oscier D.G."/>
            <person name="Mould S.J."/>
            <person name="Doehner H."/>
            <person name="Doehner K."/>
            <person name="Rommens J.M."/>
            <person name="Vincent J.B."/>
            <person name="Venter J.C."/>
            <person name="Li P.W."/>
            <person name="Mural R.J."/>
            <person name="Adams M.D."/>
            <person name="Tsui L.-C."/>
        </authorList>
    </citation>
    <scope>NUCLEOTIDE SEQUENCE [LARGE SCALE GENOMIC DNA]</scope>
</reference>
<reference key="3">
    <citation type="journal article" date="2004" name="Genome Res.">
        <title>The status, quality, and expansion of the NIH full-length cDNA project: the Mammalian Gene Collection (MGC).</title>
        <authorList>
            <consortium name="The MGC Project Team"/>
        </authorList>
    </citation>
    <scope>NUCLEOTIDE SEQUENCE [LARGE SCALE MRNA]</scope>
</reference>
<reference key="4">
    <citation type="journal article" date="2002" name="Mech. Dev.">
        <title>Exhaustive identification of human class II basic helix-loop-helix proteins by virtual library screening.</title>
        <authorList>
            <person name="McLellan A.S."/>
            <person name="Langlands K."/>
            <person name="Kealey T."/>
        </authorList>
    </citation>
    <scope>IDENTIFICATION</scope>
    <scope>TISSUE SPECIFICITY</scope>
</reference>
<reference key="5">
    <citation type="journal article" date="2011" name="BMC Syst. Biol.">
        <title>Initial characterization of the human central proteome.</title>
        <authorList>
            <person name="Burkard T.R."/>
            <person name="Planyavsky M."/>
            <person name="Kaupe I."/>
            <person name="Breitwieser F.P."/>
            <person name="Buerckstuemmer T."/>
            <person name="Bennett K.L."/>
            <person name="Superti-Furga G."/>
            <person name="Colinge J."/>
        </authorList>
    </citation>
    <scope>IDENTIFICATION BY MASS SPECTROMETRY [LARGE SCALE ANALYSIS]</scope>
</reference>
<name>BHA15_HUMAN</name>
<keyword id="KW-0238">DNA-binding</keyword>
<keyword id="KW-0539">Nucleus</keyword>
<keyword id="KW-0597">Phosphoprotein</keyword>
<keyword id="KW-1267">Proteomics identification</keyword>
<keyword id="KW-1185">Reference proteome</keyword>
<keyword id="KW-0678">Repressor</keyword>
<keyword id="KW-0804">Transcription</keyword>
<keyword id="KW-0805">Transcription regulation</keyword>
<organism>
    <name type="scientific">Homo sapiens</name>
    <name type="common">Human</name>
    <dbReference type="NCBI Taxonomy" id="9606"/>
    <lineage>
        <taxon>Eukaryota</taxon>
        <taxon>Metazoa</taxon>
        <taxon>Chordata</taxon>
        <taxon>Craniata</taxon>
        <taxon>Vertebrata</taxon>
        <taxon>Euteleostomi</taxon>
        <taxon>Mammalia</taxon>
        <taxon>Eutheria</taxon>
        <taxon>Euarchontoglires</taxon>
        <taxon>Primates</taxon>
        <taxon>Haplorrhini</taxon>
        <taxon>Catarrhini</taxon>
        <taxon>Hominidae</taxon>
        <taxon>Homo</taxon>
    </lineage>
</organism>
<feature type="chain" id="PRO_0000127150" description="Class A basic helix-loop-helix protein 15">
    <location>
        <begin position="1"/>
        <end position="189"/>
    </location>
</feature>
<feature type="domain" description="bHLH" evidence="3">
    <location>
        <begin position="75"/>
        <end position="127"/>
    </location>
</feature>
<feature type="region of interest" description="Disordered" evidence="4">
    <location>
        <begin position="1"/>
        <end position="85"/>
    </location>
</feature>
<feature type="region of interest" description="Disordered" evidence="4">
    <location>
        <begin position="167"/>
        <end position="189"/>
    </location>
</feature>
<feature type="compositionally biased region" description="Basic residues" evidence="4">
    <location>
        <begin position="1"/>
        <end position="12"/>
    </location>
</feature>
<feature type="compositionally biased region" description="Basic and acidic residues" evidence="4">
    <location>
        <begin position="68"/>
        <end position="85"/>
    </location>
</feature>
<feature type="modified residue" description="Phosphothreonine" evidence="2">
    <location>
        <position position="25"/>
    </location>
</feature>
<evidence type="ECO:0000250" key="1"/>
<evidence type="ECO:0000250" key="2">
    <source>
        <dbReference type="UniProtKB" id="Q9QYC3"/>
    </source>
</evidence>
<evidence type="ECO:0000255" key="3">
    <source>
        <dbReference type="PROSITE-ProRule" id="PRU00981"/>
    </source>
</evidence>
<evidence type="ECO:0000256" key="4">
    <source>
        <dbReference type="SAM" id="MobiDB-lite"/>
    </source>
</evidence>
<evidence type="ECO:0000269" key="5">
    <source>
    </source>
</evidence>
<evidence type="ECO:0000305" key="6"/>
<proteinExistence type="evidence at protein level"/>
<protein>
    <recommendedName>
        <fullName>Class A basic helix-loop-helix protein 15</fullName>
        <shortName>bHLHa15</shortName>
    </recommendedName>
    <alternativeName>
        <fullName>Class B basic helix-loop-helix protein 8</fullName>
        <shortName>bHLHb8</shortName>
    </alternativeName>
    <alternativeName>
        <fullName>Muscle, intestine and stomach expression 1</fullName>
        <shortName>MIST-1</shortName>
    </alternativeName>
</protein>